<gene>
    <name type="primary">trmD</name>
    <name type="ordered locus">HI_0202</name>
</gene>
<proteinExistence type="evidence at protein level"/>
<evidence type="ECO:0000250" key="1"/>
<evidence type="ECO:0000255" key="2"/>
<evidence type="ECO:0000269" key="3">
    <source>
    </source>
</evidence>
<evidence type="ECO:0000305" key="4"/>
<evidence type="ECO:0007829" key="5">
    <source>
        <dbReference type="PDB" id="4YQD"/>
    </source>
</evidence>
<evidence type="ECO:0007829" key="6">
    <source>
        <dbReference type="PDB" id="4YVG"/>
    </source>
</evidence>
<evidence type="ECO:0007829" key="7">
    <source>
        <dbReference type="PDB" id="4YVH"/>
    </source>
</evidence>
<evidence type="ECO:0007829" key="8">
    <source>
        <dbReference type="PDB" id="4YVJ"/>
    </source>
</evidence>
<name>TRMD_HAEIN</name>
<comment type="function">
    <text evidence="1">Specifically methylates guanosine-37 in various tRNAs.</text>
</comment>
<comment type="catalytic activity">
    <reaction>
        <text>guanosine(37) in tRNA + S-adenosyl-L-methionine = N(1)-methylguanosine(37) in tRNA + S-adenosyl-L-homocysteine + H(+)</text>
        <dbReference type="Rhea" id="RHEA:36899"/>
        <dbReference type="Rhea" id="RHEA-COMP:10145"/>
        <dbReference type="Rhea" id="RHEA-COMP:10147"/>
        <dbReference type="ChEBI" id="CHEBI:15378"/>
        <dbReference type="ChEBI" id="CHEBI:57856"/>
        <dbReference type="ChEBI" id="CHEBI:59789"/>
        <dbReference type="ChEBI" id="CHEBI:73542"/>
        <dbReference type="ChEBI" id="CHEBI:74269"/>
        <dbReference type="EC" id="2.1.1.228"/>
    </reaction>
</comment>
<comment type="subunit">
    <text evidence="3">Homodimer.</text>
</comment>
<comment type="subcellular location">
    <subcellularLocation>
        <location evidence="4">Cytoplasm</location>
    </subcellularLocation>
</comment>
<comment type="similarity">
    <text evidence="4">Belongs to the RNA methyltransferase TrmD family.</text>
</comment>
<feature type="chain" id="PRO_0000060385" description="tRNA (guanine-N(1)-)-methyltransferase">
    <location>
        <begin position="1"/>
        <end position="246"/>
    </location>
</feature>
<feature type="active site" description="Proton acceptor" evidence="2">
    <location>
        <position position="169"/>
    </location>
</feature>
<feature type="binding site">
    <location>
        <position position="86"/>
    </location>
    <ligand>
        <name>S-adenosyl-L-methionine</name>
        <dbReference type="ChEBI" id="CHEBI:59789"/>
    </ligand>
</feature>
<feature type="binding site">
    <location>
        <position position="113"/>
    </location>
    <ligand>
        <name>S-adenosyl-L-methionine</name>
        <dbReference type="ChEBI" id="CHEBI:59789"/>
    </ligand>
</feature>
<feature type="binding site">
    <location>
        <begin position="133"/>
        <end position="138"/>
    </location>
    <ligand>
        <name>S-adenosyl-L-methionine</name>
        <dbReference type="ChEBI" id="CHEBI:59789"/>
    </ligand>
</feature>
<feature type="strand" evidence="5">
    <location>
        <begin position="1"/>
        <end position="6"/>
    </location>
</feature>
<feature type="helix" evidence="5">
    <location>
        <begin position="10"/>
        <end position="13"/>
    </location>
</feature>
<feature type="helix" evidence="5">
    <location>
        <begin position="14"/>
        <end position="17"/>
    </location>
</feature>
<feature type="helix" evidence="5">
    <location>
        <begin position="20"/>
        <end position="27"/>
    </location>
</feature>
<feature type="strand" evidence="5">
    <location>
        <begin position="30"/>
        <end position="36"/>
    </location>
</feature>
<feature type="helix" evidence="5">
    <location>
        <begin position="38"/>
        <end position="41"/>
    </location>
</feature>
<feature type="helix" evidence="5">
    <location>
        <begin position="64"/>
        <end position="78"/>
    </location>
</feature>
<feature type="strand" evidence="5">
    <location>
        <begin position="83"/>
        <end position="88"/>
    </location>
</feature>
<feature type="strand" evidence="5">
    <location>
        <begin position="91"/>
        <end position="93"/>
    </location>
</feature>
<feature type="helix" evidence="5">
    <location>
        <begin position="96"/>
        <end position="102"/>
    </location>
</feature>
<feature type="strand" evidence="5">
    <location>
        <begin position="106"/>
        <end position="111"/>
    </location>
</feature>
<feature type="helix" evidence="5">
    <location>
        <begin position="120"/>
        <end position="126"/>
    </location>
</feature>
<feature type="strand" evidence="5">
    <location>
        <begin position="128"/>
        <end position="136"/>
    </location>
</feature>
<feature type="strand" evidence="7">
    <location>
        <begin position="139"/>
        <end position="141"/>
    </location>
</feature>
<feature type="helix" evidence="5">
    <location>
        <begin position="142"/>
        <end position="153"/>
    </location>
</feature>
<feature type="turn" evidence="5">
    <location>
        <begin position="157"/>
        <end position="159"/>
    </location>
</feature>
<feature type="helix" evidence="8">
    <location>
        <begin position="164"/>
        <end position="166"/>
    </location>
</feature>
<feature type="turn" evidence="6">
    <location>
        <begin position="170"/>
        <end position="172"/>
    </location>
</feature>
<feature type="strand" evidence="6">
    <location>
        <begin position="173"/>
        <end position="175"/>
    </location>
</feature>
<feature type="strand" evidence="5">
    <location>
        <begin position="185"/>
        <end position="187"/>
    </location>
</feature>
<feature type="helix" evidence="5">
    <location>
        <begin position="194"/>
        <end position="197"/>
    </location>
</feature>
<feature type="helix" evidence="5">
    <location>
        <begin position="201"/>
        <end position="219"/>
    </location>
</feature>
<feature type="helix" evidence="5">
    <location>
        <begin position="221"/>
        <end position="225"/>
    </location>
</feature>
<feature type="helix" evidence="5">
    <location>
        <begin position="231"/>
        <end position="245"/>
    </location>
</feature>
<keyword id="KW-0002">3D-structure</keyword>
<keyword id="KW-0963">Cytoplasm</keyword>
<keyword id="KW-0489">Methyltransferase</keyword>
<keyword id="KW-1185">Reference proteome</keyword>
<keyword id="KW-0949">S-adenosyl-L-methionine</keyword>
<keyword id="KW-0808">Transferase</keyword>
<keyword id="KW-0819">tRNA processing</keyword>
<reference key="1">
    <citation type="journal article" date="1995" name="Science">
        <title>Whole-genome random sequencing and assembly of Haemophilus influenzae Rd.</title>
        <authorList>
            <person name="Fleischmann R.D."/>
            <person name="Adams M.D."/>
            <person name="White O."/>
            <person name="Clayton R.A."/>
            <person name="Kirkness E.F."/>
            <person name="Kerlavage A.R."/>
            <person name="Bult C.J."/>
            <person name="Tomb J.-F."/>
            <person name="Dougherty B.A."/>
            <person name="Merrick J.M."/>
            <person name="McKenney K."/>
            <person name="Sutton G.G."/>
            <person name="FitzHugh W."/>
            <person name="Fields C.A."/>
            <person name="Gocayne J.D."/>
            <person name="Scott J.D."/>
            <person name="Shirley R."/>
            <person name="Liu L.-I."/>
            <person name="Glodek A."/>
            <person name="Kelley J.M."/>
            <person name="Weidman J.F."/>
            <person name="Phillips C.A."/>
            <person name="Spriggs T."/>
            <person name="Hedblom E."/>
            <person name="Cotton M.D."/>
            <person name="Utterback T.R."/>
            <person name="Hanna M.C."/>
            <person name="Nguyen D.T."/>
            <person name="Saudek D.M."/>
            <person name="Brandon R.C."/>
            <person name="Fine L.D."/>
            <person name="Fritchman J.L."/>
            <person name="Fuhrmann J.L."/>
            <person name="Geoghagen N.S.M."/>
            <person name="Gnehm C.L."/>
            <person name="McDonald L.A."/>
            <person name="Small K.V."/>
            <person name="Fraser C.M."/>
            <person name="Smith H.O."/>
            <person name="Venter J.C."/>
        </authorList>
    </citation>
    <scope>NUCLEOTIDE SEQUENCE [LARGE SCALE GENOMIC DNA]</scope>
    <source>
        <strain>ATCC 51907 / DSM 11121 / KW20 / Rd</strain>
    </source>
</reference>
<reference key="2">
    <citation type="journal article" date="2003" name="EMBO J.">
        <title>Crystal structure of tRNA(m1G37)methyltransferase: insights into tRNA recognition.</title>
        <authorList>
            <person name="Ahn H.J."/>
            <person name="Kim H.-W."/>
            <person name="Yoon H.-J."/>
            <person name="Lee B.I."/>
            <person name="Suh S.W."/>
            <person name="Yang J.K."/>
        </authorList>
    </citation>
    <scope>X-RAY CRYSTALLOGRAPHY (1.8 ANGSTROMS) IN COMPLEX WITH SUBSTRATE</scope>
    <scope>SUBUNIT</scope>
</reference>
<protein>
    <recommendedName>
        <fullName>tRNA (guanine-N(1)-)-methyltransferase</fullName>
        <ecNumber>2.1.1.228</ecNumber>
    </recommendedName>
    <alternativeName>
        <fullName>M1G-methyltransferase</fullName>
    </alternativeName>
    <alternativeName>
        <fullName>tRNA [GM37] methyltransferase</fullName>
    </alternativeName>
</protein>
<accession>P43912</accession>
<dbReference type="EC" id="2.1.1.228"/>
<dbReference type="EMBL" id="L42023">
    <property type="protein sequence ID" value="AAC21871.1"/>
    <property type="molecule type" value="Genomic_DNA"/>
</dbReference>
<dbReference type="PIR" id="C64054">
    <property type="entry name" value="C64054"/>
</dbReference>
<dbReference type="RefSeq" id="NP_438371.1">
    <property type="nucleotide sequence ID" value="NC_000907.1"/>
</dbReference>
<dbReference type="PDB" id="1UAJ">
    <property type="method" value="X-ray"/>
    <property type="resolution" value="1.85 A"/>
    <property type="chains" value="A=1-246"/>
</dbReference>
<dbReference type="PDB" id="1UAK">
    <property type="method" value="X-ray"/>
    <property type="resolution" value="2.05 A"/>
    <property type="chains" value="A=1-246"/>
</dbReference>
<dbReference type="PDB" id="1UAL">
    <property type="method" value="X-ray"/>
    <property type="resolution" value="1.80 A"/>
    <property type="chains" value="A=1-246"/>
</dbReference>
<dbReference type="PDB" id="1UAM">
    <property type="method" value="X-ray"/>
    <property type="resolution" value="2.20 A"/>
    <property type="chains" value="A=1-246"/>
</dbReference>
<dbReference type="PDB" id="3AXZ">
    <property type="method" value="X-ray"/>
    <property type="resolution" value="2.25 A"/>
    <property type="chains" value="A=1-246"/>
</dbReference>
<dbReference type="PDB" id="4MCB">
    <property type="method" value="X-ray"/>
    <property type="resolution" value="1.94 A"/>
    <property type="chains" value="A/B=1-246"/>
</dbReference>
<dbReference type="PDB" id="4MCC">
    <property type="method" value="X-ray"/>
    <property type="resolution" value="1.95 A"/>
    <property type="chains" value="A/B=1-246"/>
</dbReference>
<dbReference type="PDB" id="4MCD">
    <property type="method" value="X-ray"/>
    <property type="resolution" value="1.55 A"/>
    <property type="chains" value="A=1-246"/>
</dbReference>
<dbReference type="PDB" id="4YPW">
    <property type="method" value="X-ray"/>
    <property type="resolution" value="2.31 A"/>
    <property type="chains" value="A=1-246"/>
</dbReference>
<dbReference type="PDB" id="4YPX">
    <property type="method" value="X-ray"/>
    <property type="resolution" value="1.89 A"/>
    <property type="chains" value="A=1-246"/>
</dbReference>
<dbReference type="PDB" id="4YPY">
    <property type="method" value="X-ray"/>
    <property type="resolution" value="1.90 A"/>
    <property type="chains" value="A=1-246"/>
</dbReference>
<dbReference type="PDB" id="4YPZ">
    <property type="method" value="X-ray"/>
    <property type="resolution" value="1.84 A"/>
    <property type="chains" value="A=1-246"/>
</dbReference>
<dbReference type="PDB" id="4YQ0">
    <property type="method" value="X-ray"/>
    <property type="resolution" value="1.76 A"/>
    <property type="chains" value="A=1-246"/>
</dbReference>
<dbReference type="PDB" id="4YQ1">
    <property type="method" value="X-ray"/>
    <property type="resolution" value="2.00 A"/>
    <property type="chains" value="A=1-246"/>
</dbReference>
<dbReference type="PDB" id="4YQ2">
    <property type="method" value="X-ray"/>
    <property type="resolution" value="2.65 A"/>
    <property type="chains" value="A=1-246"/>
</dbReference>
<dbReference type="PDB" id="4YQ3">
    <property type="method" value="X-ray"/>
    <property type="resolution" value="2.49 A"/>
    <property type="chains" value="A=1-246"/>
</dbReference>
<dbReference type="PDB" id="4YQ4">
    <property type="method" value="X-ray"/>
    <property type="resolution" value="1.89 A"/>
    <property type="chains" value="A=1-246"/>
</dbReference>
<dbReference type="PDB" id="4YQ5">
    <property type="method" value="X-ray"/>
    <property type="resolution" value="1.76 A"/>
    <property type="chains" value="A=1-246"/>
</dbReference>
<dbReference type="PDB" id="4YQ6">
    <property type="method" value="X-ray"/>
    <property type="resolution" value="1.90 A"/>
    <property type="chains" value="A=1-246"/>
</dbReference>
<dbReference type="PDB" id="4YQ7">
    <property type="method" value="X-ray"/>
    <property type="resolution" value="1.80 A"/>
    <property type="chains" value="A=1-246"/>
</dbReference>
<dbReference type="PDB" id="4YQ8">
    <property type="method" value="X-ray"/>
    <property type="resolution" value="1.94 A"/>
    <property type="chains" value="A=1-246"/>
</dbReference>
<dbReference type="PDB" id="4YQ9">
    <property type="method" value="X-ray"/>
    <property type="resolution" value="1.64 A"/>
    <property type="chains" value="A=1-246"/>
</dbReference>
<dbReference type="PDB" id="4YQA">
    <property type="method" value="X-ray"/>
    <property type="resolution" value="1.55 A"/>
    <property type="chains" value="A=1-246"/>
</dbReference>
<dbReference type="PDB" id="4YQB">
    <property type="method" value="X-ray"/>
    <property type="resolution" value="2.10 A"/>
    <property type="chains" value="A=1-246"/>
</dbReference>
<dbReference type="PDB" id="4YQC">
    <property type="method" value="X-ray"/>
    <property type="resolution" value="1.89 A"/>
    <property type="chains" value="A=1-246"/>
</dbReference>
<dbReference type="PDB" id="4YQD">
    <property type="method" value="X-ray"/>
    <property type="resolution" value="1.45 A"/>
    <property type="chains" value="A=1-246"/>
</dbReference>
<dbReference type="PDB" id="4YQG">
    <property type="method" value="X-ray"/>
    <property type="resolution" value="1.86 A"/>
    <property type="chains" value="A=1-246"/>
</dbReference>
<dbReference type="PDB" id="4YQI">
    <property type="method" value="X-ray"/>
    <property type="resolution" value="1.92 A"/>
    <property type="chains" value="A=1-246"/>
</dbReference>
<dbReference type="PDB" id="4YQJ">
    <property type="method" value="X-ray"/>
    <property type="resolution" value="1.94 A"/>
    <property type="chains" value="A=1-246"/>
</dbReference>
<dbReference type="PDB" id="4YQK">
    <property type="method" value="X-ray"/>
    <property type="resolution" value="1.83 A"/>
    <property type="chains" value="A=1-246"/>
</dbReference>
<dbReference type="PDB" id="4YQL">
    <property type="method" value="X-ray"/>
    <property type="resolution" value="2.40 A"/>
    <property type="chains" value="A=1-246"/>
</dbReference>
<dbReference type="PDB" id="4YQN">
    <property type="method" value="X-ray"/>
    <property type="resolution" value="2.20 A"/>
    <property type="chains" value="A=1-246"/>
</dbReference>
<dbReference type="PDB" id="4YQO">
    <property type="method" value="X-ray"/>
    <property type="resolution" value="1.68 A"/>
    <property type="chains" value="A=1-246"/>
</dbReference>
<dbReference type="PDB" id="4YQP">
    <property type="method" value="X-ray"/>
    <property type="resolution" value="2.60 A"/>
    <property type="chains" value="A=1-246"/>
</dbReference>
<dbReference type="PDB" id="4YQQ">
    <property type="method" value="X-ray"/>
    <property type="resolution" value="1.78 A"/>
    <property type="chains" value="A=1-246"/>
</dbReference>
<dbReference type="PDB" id="4YQR">
    <property type="method" value="X-ray"/>
    <property type="resolution" value="1.70 A"/>
    <property type="chains" value="A=1-246"/>
</dbReference>
<dbReference type="PDB" id="4YQS">
    <property type="method" value="X-ray"/>
    <property type="resolution" value="1.90 A"/>
    <property type="chains" value="A=1-246"/>
</dbReference>
<dbReference type="PDB" id="4YQT">
    <property type="method" value="X-ray"/>
    <property type="resolution" value="1.60 A"/>
    <property type="chains" value="A=1-246"/>
</dbReference>
<dbReference type="PDB" id="4YVG">
    <property type="method" value="X-ray"/>
    <property type="resolution" value="1.55 A"/>
    <property type="chains" value="A=1-246"/>
</dbReference>
<dbReference type="PDB" id="4YVH">
    <property type="method" value="X-ray"/>
    <property type="resolution" value="1.60 A"/>
    <property type="chains" value="A=1-246"/>
</dbReference>
<dbReference type="PDB" id="4YVI">
    <property type="method" value="X-ray"/>
    <property type="resolution" value="3.01 A"/>
    <property type="chains" value="A/B=1-246"/>
</dbReference>
<dbReference type="PDB" id="4YVJ">
    <property type="method" value="X-ray"/>
    <property type="resolution" value="2.90 A"/>
    <property type="chains" value="A/B=1-246"/>
</dbReference>
<dbReference type="PDB" id="4YVK">
    <property type="method" value="X-ray"/>
    <property type="resolution" value="3.00 A"/>
    <property type="chains" value="A/B=1-246"/>
</dbReference>
<dbReference type="PDB" id="5D9F">
    <property type="method" value="X-ray"/>
    <property type="resolution" value="1.91 A"/>
    <property type="chains" value="A=1-246"/>
</dbReference>
<dbReference type="PDBsum" id="1UAJ"/>
<dbReference type="PDBsum" id="1UAK"/>
<dbReference type="PDBsum" id="1UAL"/>
<dbReference type="PDBsum" id="1UAM"/>
<dbReference type="PDBsum" id="3AXZ"/>
<dbReference type="PDBsum" id="4MCB"/>
<dbReference type="PDBsum" id="4MCC"/>
<dbReference type="PDBsum" id="4MCD"/>
<dbReference type="PDBsum" id="4YPW"/>
<dbReference type="PDBsum" id="4YPX"/>
<dbReference type="PDBsum" id="4YPY"/>
<dbReference type="PDBsum" id="4YPZ"/>
<dbReference type="PDBsum" id="4YQ0"/>
<dbReference type="PDBsum" id="4YQ1"/>
<dbReference type="PDBsum" id="4YQ2"/>
<dbReference type="PDBsum" id="4YQ3"/>
<dbReference type="PDBsum" id="4YQ4"/>
<dbReference type="PDBsum" id="4YQ5"/>
<dbReference type="PDBsum" id="4YQ6"/>
<dbReference type="PDBsum" id="4YQ7"/>
<dbReference type="PDBsum" id="4YQ8"/>
<dbReference type="PDBsum" id="4YQ9"/>
<dbReference type="PDBsum" id="4YQA"/>
<dbReference type="PDBsum" id="4YQB"/>
<dbReference type="PDBsum" id="4YQC"/>
<dbReference type="PDBsum" id="4YQD"/>
<dbReference type="PDBsum" id="4YQG"/>
<dbReference type="PDBsum" id="4YQI"/>
<dbReference type="PDBsum" id="4YQJ"/>
<dbReference type="PDBsum" id="4YQK"/>
<dbReference type="PDBsum" id="4YQL"/>
<dbReference type="PDBsum" id="4YQN"/>
<dbReference type="PDBsum" id="4YQO"/>
<dbReference type="PDBsum" id="4YQP"/>
<dbReference type="PDBsum" id="4YQQ"/>
<dbReference type="PDBsum" id="4YQR"/>
<dbReference type="PDBsum" id="4YQS"/>
<dbReference type="PDBsum" id="4YQT"/>
<dbReference type="PDBsum" id="4YVG"/>
<dbReference type="PDBsum" id="4YVH"/>
<dbReference type="PDBsum" id="4YVI"/>
<dbReference type="PDBsum" id="4YVJ"/>
<dbReference type="PDBsum" id="4YVK"/>
<dbReference type="PDBsum" id="5D9F"/>
<dbReference type="SMR" id="P43912"/>
<dbReference type="STRING" id="71421.HI_0202"/>
<dbReference type="BindingDB" id="P43912"/>
<dbReference type="DrugBank" id="DB01752">
    <property type="generic name" value="S-adenosyl-L-homocysteine"/>
</dbReference>
<dbReference type="EnsemblBacteria" id="AAC21871">
    <property type="protein sequence ID" value="AAC21871"/>
    <property type="gene ID" value="HI_0202"/>
</dbReference>
<dbReference type="KEGG" id="hin:HI_0202"/>
<dbReference type="PATRIC" id="fig|71421.8.peg.207"/>
<dbReference type="eggNOG" id="COG0336">
    <property type="taxonomic scope" value="Bacteria"/>
</dbReference>
<dbReference type="HOGENOM" id="CLU_047363_0_1_6"/>
<dbReference type="OrthoDB" id="9807416at2"/>
<dbReference type="PhylomeDB" id="P43912"/>
<dbReference type="BioCyc" id="HINF71421:G1GJ1-213-MONOMER"/>
<dbReference type="BRENDA" id="2.1.1.228">
    <property type="organism ID" value="2529"/>
</dbReference>
<dbReference type="EvolutionaryTrace" id="P43912"/>
<dbReference type="Proteomes" id="UP000000579">
    <property type="component" value="Chromosome"/>
</dbReference>
<dbReference type="GO" id="GO:0005829">
    <property type="term" value="C:cytosol"/>
    <property type="evidence" value="ECO:0000318"/>
    <property type="project" value="GO_Central"/>
</dbReference>
<dbReference type="GO" id="GO:0052906">
    <property type="term" value="F:tRNA (guanine(37)-N1)-methyltransferase activity"/>
    <property type="evidence" value="ECO:0000318"/>
    <property type="project" value="GO_Central"/>
</dbReference>
<dbReference type="GO" id="GO:0002939">
    <property type="term" value="P:tRNA N1-guanine methylation"/>
    <property type="evidence" value="ECO:0000318"/>
    <property type="project" value="GO_Central"/>
</dbReference>
<dbReference type="CDD" id="cd18080">
    <property type="entry name" value="TrmD-like"/>
    <property type="match status" value="1"/>
</dbReference>
<dbReference type="FunFam" id="1.10.1270.20:FF:000001">
    <property type="entry name" value="tRNA (guanine-N(1)-)-methyltransferase"/>
    <property type="match status" value="1"/>
</dbReference>
<dbReference type="FunFam" id="3.40.1280.10:FF:000001">
    <property type="entry name" value="tRNA (guanine-N(1)-)-methyltransferase"/>
    <property type="match status" value="1"/>
</dbReference>
<dbReference type="Gene3D" id="3.40.1280.10">
    <property type="match status" value="1"/>
</dbReference>
<dbReference type="Gene3D" id="1.10.1270.20">
    <property type="entry name" value="tRNA(m1g37)methyltransferase, domain 2"/>
    <property type="match status" value="1"/>
</dbReference>
<dbReference type="HAMAP" id="MF_00605">
    <property type="entry name" value="TrmD"/>
    <property type="match status" value="1"/>
</dbReference>
<dbReference type="InterPro" id="IPR029028">
    <property type="entry name" value="Alpha/beta_knot_MTases"/>
</dbReference>
<dbReference type="InterPro" id="IPR023148">
    <property type="entry name" value="tRNA_m1G_MeTrfase_C_sf"/>
</dbReference>
<dbReference type="InterPro" id="IPR002649">
    <property type="entry name" value="tRNA_m1G_MeTrfase_TrmD"/>
</dbReference>
<dbReference type="InterPro" id="IPR029026">
    <property type="entry name" value="tRNA_m1G_MTases_N"/>
</dbReference>
<dbReference type="InterPro" id="IPR016009">
    <property type="entry name" value="tRNA_MeTrfase_TRMD/TRM10"/>
</dbReference>
<dbReference type="NCBIfam" id="NF000648">
    <property type="entry name" value="PRK00026.1"/>
    <property type="match status" value="1"/>
</dbReference>
<dbReference type="NCBIfam" id="TIGR00088">
    <property type="entry name" value="trmD"/>
    <property type="match status" value="1"/>
</dbReference>
<dbReference type="PANTHER" id="PTHR46417">
    <property type="entry name" value="TRNA (GUANINE-N(1)-)-METHYLTRANSFERASE"/>
    <property type="match status" value="1"/>
</dbReference>
<dbReference type="PANTHER" id="PTHR46417:SF1">
    <property type="entry name" value="TRNA (GUANINE-N(1)-)-METHYLTRANSFERASE"/>
    <property type="match status" value="1"/>
</dbReference>
<dbReference type="Pfam" id="PF01746">
    <property type="entry name" value="tRNA_m1G_MT"/>
    <property type="match status" value="1"/>
</dbReference>
<dbReference type="PIRSF" id="PIRSF000386">
    <property type="entry name" value="tRNA_mtase"/>
    <property type="match status" value="1"/>
</dbReference>
<dbReference type="SUPFAM" id="SSF75217">
    <property type="entry name" value="alpha/beta knot"/>
    <property type="match status" value="1"/>
</dbReference>
<sequence>MWIGVISLFPEMFKAITEFGVTGRAVKHNLLKVECWNPRDFTFDKHKTVDDRPYGGGPGMLMMVQPLRDAIHTAKAAAGEGAKVIYLSPQGRKLDQGGVTELAQNQKLILVCGRYEGIDERLIQTEIDEEWSIGDYVLTGGELPAMTLIDAVARFIPGVLGKQASAEEDSFADGLLDCPHYTRPEVLEGLTVPPVLMSGHHEEIRKWRLKQSLQRTWLRRPELLEGLALTDEQRKLLKEAQAEHNS</sequence>
<organism>
    <name type="scientific">Haemophilus influenzae (strain ATCC 51907 / DSM 11121 / KW20 / Rd)</name>
    <dbReference type="NCBI Taxonomy" id="71421"/>
    <lineage>
        <taxon>Bacteria</taxon>
        <taxon>Pseudomonadati</taxon>
        <taxon>Pseudomonadota</taxon>
        <taxon>Gammaproteobacteria</taxon>
        <taxon>Pasteurellales</taxon>
        <taxon>Pasteurellaceae</taxon>
        <taxon>Haemophilus</taxon>
    </lineage>
</organism>